<evidence type="ECO:0000269" key="1">
    <source>
    </source>
</evidence>
<evidence type="ECO:0000305" key="2"/>
<name>THMAC_THETS</name>
<accession>Q6T6C2</accession>
<feature type="signal peptide" evidence="1">
    <location>
        <begin position="1"/>
        <end position="22"/>
    </location>
</feature>
<feature type="chain" id="PRO_0000342176" description="Theromacin">
    <location>
        <begin position="23"/>
        <end position="97"/>
    </location>
</feature>
<feature type="disulfide bond" evidence="1">
    <location>
        <begin position="24"/>
        <end position="31"/>
    </location>
</feature>
<feature type="disulfide bond" evidence="1">
    <location>
        <begin position="46"/>
        <end position="50"/>
    </location>
</feature>
<feature type="disulfide bond" evidence="1">
    <location>
        <begin position="53"/>
        <end position="95"/>
    </location>
</feature>
<feature type="disulfide bond" evidence="1">
    <location>
        <begin position="61"/>
        <end position="69"/>
    </location>
</feature>
<feature type="disulfide bond" evidence="1">
    <location>
        <begin position="79"/>
        <end position="81"/>
    </location>
</feature>
<proteinExistence type="evidence at protein level"/>
<sequence length="97" mass="10818">MELKSGLSILLCFGICIAVINAGCFEDWSRCSPSTSRGTGVLWRDCDSYCKVCFKADRGECFDSPSLNCPQRLPNNKQCRCINARTAKDNRNPTCWA</sequence>
<dbReference type="EMBL" id="AY434032">
    <property type="protein sequence ID" value="AAR12065.1"/>
    <property type="molecule type" value="mRNA"/>
</dbReference>
<dbReference type="SMR" id="Q6T6C2"/>
<dbReference type="GO" id="GO:0005576">
    <property type="term" value="C:extracellular region"/>
    <property type="evidence" value="ECO:0007669"/>
    <property type="project" value="UniProtKB-SubCell"/>
</dbReference>
<dbReference type="GO" id="GO:0006952">
    <property type="term" value="P:defense response"/>
    <property type="evidence" value="ECO:0007669"/>
    <property type="project" value="InterPro"/>
</dbReference>
<dbReference type="Gene3D" id="3.30.30.100">
    <property type="match status" value="1"/>
</dbReference>
<dbReference type="InterPro" id="IPR029230">
    <property type="entry name" value="Macin"/>
</dbReference>
<dbReference type="InterPro" id="IPR038456">
    <property type="entry name" value="Macin_sf"/>
</dbReference>
<dbReference type="Pfam" id="PF14865">
    <property type="entry name" value="Macin"/>
    <property type="match status" value="1"/>
</dbReference>
<organism>
    <name type="scientific">Theromyzon tessulatum</name>
    <name type="common">Duck leech</name>
    <dbReference type="NCBI Taxonomy" id="13286"/>
    <lineage>
        <taxon>Eukaryota</taxon>
        <taxon>Metazoa</taxon>
        <taxon>Spiralia</taxon>
        <taxon>Lophotrochozoa</taxon>
        <taxon>Annelida</taxon>
        <taxon>Clitellata</taxon>
        <taxon>Hirudinea</taxon>
        <taxon>Rhynchobdellida</taxon>
        <taxon>Glossiphoniidae</taxon>
        <taxon>Theromyzon</taxon>
    </lineage>
</organism>
<protein>
    <recommendedName>
        <fullName>Theromacin</fullName>
    </recommendedName>
</protein>
<reference key="1">
    <citation type="journal article" date="2004" name="J. Biol. Chem.">
        <title>Molecular characterization of two novel antibacterial peptides inducible upon bacterial challenge in an annelid, the leech Theromyzon tessulatum.</title>
        <authorList>
            <person name="Tasiemski A."/>
            <person name="Vandenbulcke F."/>
            <person name="Mitta G."/>
            <person name="Lemoine J."/>
            <person name="Lefebvre C."/>
            <person name="Sautiere P.-E."/>
            <person name="Salzet M."/>
        </authorList>
    </citation>
    <scope>NUCLEOTIDE SEQUENCE [MRNA]</scope>
    <scope>PROTEIN SEQUENCE OF 23-52</scope>
    <scope>DISULFIDE BONDS</scope>
    <scope>SUBCELLULAR LOCATION</scope>
    <scope>FUNCTION</scope>
    <scope>INDUCTION</scope>
    <scope>MASS SPECTROMETRY</scope>
</reference>
<comment type="function">
    <text evidence="1">Has a bactericidal activity. Active against M.luteus. No activity toward E.coli and F.oxysporum.</text>
</comment>
<comment type="subcellular location">
    <subcellularLocation>
        <location evidence="1">Secreted</location>
    </subcellularLocation>
</comment>
<comment type="tissue specificity">
    <text>Coelomic liquid (at protein level). Expressed in large fat cells in contact with coelomic cavities, in intestinal epithelia and at the epidermis level.</text>
</comment>
<comment type="induction">
    <text evidence="1">After blood meal ingestion and upon bacterial challenge.</text>
</comment>
<comment type="mass spectrometry" mass="8517.98" method="MALDI" evidence="1"/>
<comment type="similarity">
    <text evidence="2">Belongs to the macin family.</text>
</comment>
<keyword id="KW-0929">Antimicrobial</keyword>
<keyword id="KW-0903">Direct protein sequencing</keyword>
<keyword id="KW-1015">Disulfide bond</keyword>
<keyword id="KW-0964">Secreted</keyword>
<keyword id="KW-0732">Signal</keyword>